<reference key="1">
    <citation type="thesis" date="1993" institute="University of Maryland" country="United States">
        <title>A study on the channel catfish (Ictalurus punctatus) growth hormone gene family: structures of growth hormone and prolactin genes and somatolactin cDNA, their evolutionary implications and expression in the pituitary gland.</title>
        <authorList>
            <person name="Tang Y."/>
        </authorList>
    </citation>
    <scope>NUCLEOTIDE SEQUENCE [GENOMIC DNA]</scope>
    <source>
        <tissue>Pituitary</tissue>
    </source>
</reference>
<reference key="2">
    <citation type="journal article" date="1992" name="Mol. Mar. Biol. Biotechnol.">
        <title>Chemical identification of catfish growth hormone and prolactin.</title>
        <authorList>
            <person name="Watanabe K."/>
            <person name="Igarashi A."/>
            <person name="Noso T."/>
            <person name="Chen T.T."/>
            <person name="Dunham R.A."/>
            <person name="Kawauchi H."/>
        </authorList>
    </citation>
    <scope>NUCLEOTIDE SEQUENCE [GENOMIC DNA] OF 27-212</scope>
    <source>
        <tissue>Pituitary</tissue>
    </source>
</reference>
<name>PRL_ICTPU</name>
<dbReference type="EMBL" id="AF267990">
    <property type="protein sequence ID" value="AAF82287.1"/>
    <property type="molecule type" value="Genomic_DNA"/>
</dbReference>
<dbReference type="SMR" id="P51904"/>
<dbReference type="STRING" id="7998.ENSIPUP00000009385"/>
<dbReference type="Proteomes" id="UP000221080">
    <property type="component" value="Unplaced"/>
</dbReference>
<dbReference type="GO" id="GO:0005615">
    <property type="term" value="C:extracellular space"/>
    <property type="evidence" value="ECO:0007669"/>
    <property type="project" value="TreeGrafter"/>
</dbReference>
<dbReference type="GO" id="GO:0005179">
    <property type="term" value="F:hormone activity"/>
    <property type="evidence" value="ECO:0007669"/>
    <property type="project" value="UniProtKB-KW"/>
</dbReference>
<dbReference type="GO" id="GO:0008284">
    <property type="term" value="P:positive regulation of cell population proliferation"/>
    <property type="evidence" value="ECO:0007669"/>
    <property type="project" value="TreeGrafter"/>
</dbReference>
<dbReference type="GO" id="GO:0046427">
    <property type="term" value="P:positive regulation of receptor signaling pathway via JAK-STAT"/>
    <property type="evidence" value="ECO:0007669"/>
    <property type="project" value="TreeGrafter"/>
</dbReference>
<dbReference type="GO" id="GO:0031667">
    <property type="term" value="P:response to nutrient levels"/>
    <property type="evidence" value="ECO:0007669"/>
    <property type="project" value="TreeGrafter"/>
</dbReference>
<dbReference type="Gene3D" id="1.20.1250.10">
    <property type="match status" value="1"/>
</dbReference>
<dbReference type="InterPro" id="IPR009079">
    <property type="entry name" value="4_helix_cytokine-like_core"/>
</dbReference>
<dbReference type="InterPro" id="IPR001400">
    <property type="entry name" value="Somatotropin/Prolactin"/>
</dbReference>
<dbReference type="InterPro" id="IPR018116">
    <property type="entry name" value="Somatotropin_CS"/>
</dbReference>
<dbReference type="PANTHER" id="PTHR11417:SF5">
    <property type="entry name" value="PROLACTIN"/>
    <property type="match status" value="1"/>
</dbReference>
<dbReference type="PANTHER" id="PTHR11417">
    <property type="entry name" value="SOMATOTROPIN,PROLACTIN"/>
    <property type="match status" value="1"/>
</dbReference>
<dbReference type="Pfam" id="PF00103">
    <property type="entry name" value="Hormone_1"/>
    <property type="match status" value="1"/>
</dbReference>
<dbReference type="PRINTS" id="PR00836">
    <property type="entry name" value="SOMATOTROPIN"/>
</dbReference>
<dbReference type="SUPFAM" id="SSF47266">
    <property type="entry name" value="4-helical cytokines"/>
    <property type="match status" value="1"/>
</dbReference>
<dbReference type="PROSITE" id="PS00266">
    <property type="entry name" value="SOMATOTROPIN_1"/>
    <property type="match status" value="1"/>
</dbReference>
<dbReference type="PROSITE" id="PS00338">
    <property type="entry name" value="SOMATOTROPIN_2"/>
    <property type="match status" value="1"/>
</dbReference>
<keyword id="KW-1015">Disulfide bond</keyword>
<keyword id="KW-0372">Hormone</keyword>
<keyword id="KW-0964">Secreted</keyword>
<keyword id="KW-0732">Signal</keyword>
<evidence type="ECO:0000250" key="1"/>
<evidence type="ECO:0000305" key="2"/>
<accession>P51904</accession>
<accession>Q9I819</accession>
<sequence length="212" mass="23366">MARCCKCPRLHLAVTVLACVLVFTEGVNLNDLLDRASQLSDKMHSLSTSLTNDLDSHFSSVGGKLMRPSMCHTSSLQIPNDKDQALSVPEGELLSLVRSLLMAWSDPLALLSSEATSLPHPERNSINTKTRELQDHTNSLGAGLERLGRKMGSSPESLSSLPFNSNDLGQDNISRLVNFHFLLSCFRRDSHKIDSFLKVLRCDAAKMLPEMC</sequence>
<feature type="signal peptide">
    <location>
        <begin position="1"/>
        <end position="26"/>
    </location>
</feature>
<feature type="chain" id="PRO_0000032938" description="Prolactin">
    <location>
        <begin position="27"/>
        <end position="212"/>
    </location>
</feature>
<feature type="disulfide bond" evidence="1">
    <location>
        <begin position="71"/>
        <end position="185"/>
    </location>
</feature>
<feature type="disulfide bond" evidence="1">
    <location>
        <begin position="202"/>
        <end position="212"/>
    </location>
</feature>
<feature type="sequence conflict" description="In Ref. 2." evidence="2" ref="2">
    <original>G</original>
    <variation>S</variation>
    <location>
        <position position="91"/>
    </location>
</feature>
<feature type="sequence conflict" description="In Ref. 2." evidence="2" ref="2">
    <original>T</original>
    <variation>S</variation>
    <location>
        <position position="128"/>
    </location>
</feature>
<feature type="sequence conflict" description="In Ref. 2." evidence="2" ref="2">
    <original>D</original>
    <variation>R</variation>
    <location>
        <position position="203"/>
    </location>
</feature>
<proteinExistence type="evidence at transcript level"/>
<organism>
    <name type="scientific">Ictalurus punctatus</name>
    <name type="common">Channel catfish</name>
    <name type="synonym">Silurus punctatus</name>
    <dbReference type="NCBI Taxonomy" id="7998"/>
    <lineage>
        <taxon>Eukaryota</taxon>
        <taxon>Metazoa</taxon>
        <taxon>Chordata</taxon>
        <taxon>Craniata</taxon>
        <taxon>Vertebrata</taxon>
        <taxon>Euteleostomi</taxon>
        <taxon>Actinopterygii</taxon>
        <taxon>Neopterygii</taxon>
        <taxon>Teleostei</taxon>
        <taxon>Ostariophysi</taxon>
        <taxon>Siluriformes</taxon>
        <taxon>Ictaluridae</taxon>
        <taxon>Ictalurus</taxon>
    </lineage>
</organism>
<protein>
    <recommendedName>
        <fullName>Prolactin</fullName>
        <shortName>PRL</shortName>
    </recommendedName>
</protein>
<gene>
    <name type="primary">prl</name>
</gene>
<comment type="subcellular location">
    <subcellularLocation>
        <location>Secreted</location>
    </subcellularLocation>
</comment>
<comment type="tissue specificity">
    <text>Pituitary gland.</text>
</comment>
<comment type="similarity">
    <text evidence="2">Belongs to the somatotropin/prolactin family.</text>
</comment>